<proteinExistence type="inferred from homology"/>
<dbReference type="EC" id="4.2.1.-" evidence="1"/>
<dbReference type="EMBL" id="AP011115">
    <property type="protein sequence ID" value="BAH51515.1"/>
    <property type="molecule type" value="Genomic_DNA"/>
</dbReference>
<dbReference type="RefSeq" id="WP_012690466.1">
    <property type="nucleotide sequence ID" value="NC_012522.1"/>
</dbReference>
<dbReference type="SMR" id="C1B762"/>
<dbReference type="STRING" id="632772.ROP_32680"/>
<dbReference type="KEGG" id="rop:ROP_32680"/>
<dbReference type="PATRIC" id="fig|632772.20.peg.3428"/>
<dbReference type="HOGENOM" id="CLU_059759_0_0_11"/>
<dbReference type="OrthoDB" id="149585at2"/>
<dbReference type="Proteomes" id="UP000002212">
    <property type="component" value="Chromosome"/>
</dbReference>
<dbReference type="GO" id="GO:0016829">
    <property type="term" value="F:lyase activity"/>
    <property type="evidence" value="ECO:0007669"/>
    <property type="project" value="UniProtKB-KW"/>
</dbReference>
<dbReference type="FunFam" id="3.30.2040.10:FF:000001">
    <property type="entry name" value="D-glutamate cyclase, mitochondrial"/>
    <property type="match status" value="1"/>
</dbReference>
<dbReference type="Gene3D" id="3.40.1640.10">
    <property type="entry name" value="PSTPO5379-like"/>
    <property type="match status" value="1"/>
</dbReference>
<dbReference type="Gene3D" id="3.30.2040.10">
    <property type="entry name" value="PSTPO5379-like domain"/>
    <property type="match status" value="1"/>
</dbReference>
<dbReference type="HAMAP" id="MF_01830">
    <property type="entry name" value="Hydro_lyase"/>
    <property type="match status" value="1"/>
</dbReference>
<dbReference type="InterPro" id="IPR009906">
    <property type="entry name" value="D-Glu_cyclase"/>
</dbReference>
<dbReference type="InterPro" id="IPR038021">
    <property type="entry name" value="Putative_hydro-lyase"/>
</dbReference>
<dbReference type="InterPro" id="IPR016938">
    <property type="entry name" value="UPF0317"/>
</dbReference>
<dbReference type="NCBIfam" id="NF003969">
    <property type="entry name" value="PRK05463.1"/>
    <property type="match status" value="1"/>
</dbReference>
<dbReference type="PANTHER" id="PTHR32022">
    <property type="entry name" value="D-GLUTAMATE CYCLASE, MITOCHONDRIAL"/>
    <property type="match status" value="1"/>
</dbReference>
<dbReference type="PANTHER" id="PTHR32022:SF10">
    <property type="entry name" value="D-GLUTAMATE CYCLASE, MITOCHONDRIAL"/>
    <property type="match status" value="1"/>
</dbReference>
<dbReference type="Pfam" id="PF07286">
    <property type="entry name" value="D-Glu_cyclase"/>
    <property type="match status" value="1"/>
</dbReference>
<dbReference type="PIRSF" id="PIRSF029755">
    <property type="entry name" value="UCP029755"/>
    <property type="match status" value="1"/>
</dbReference>
<dbReference type="SUPFAM" id="SSF160920">
    <property type="entry name" value="PSTPO5379-like"/>
    <property type="match status" value="1"/>
</dbReference>
<accession>C1B762</accession>
<name>Y3268_RHOOB</name>
<feature type="chain" id="PRO_0000379859" description="Putative hydro-lyase ROP_32680">
    <location>
        <begin position="1"/>
        <end position="262"/>
    </location>
</feature>
<organism>
    <name type="scientific">Rhodococcus opacus (strain B4)</name>
    <dbReference type="NCBI Taxonomy" id="632772"/>
    <lineage>
        <taxon>Bacteria</taxon>
        <taxon>Bacillati</taxon>
        <taxon>Actinomycetota</taxon>
        <taxon>Actinomycetes</taxon>
        <taxon>Mycobacteriales</taxon>
        <taxon>Nocardiaceae</taxon>
        <taxon>Rhodococcus</taxon>
    </lineage>
</organism>
<gene>
    <name type="ordered locus">ROP_32680</name>
</gene>
<sequence>MPDSPTDLRSAFRSGRVTPTAGLAPGFAQTNLIAVPQDWAYDVLLFTQRNPKPCPVLDVGDAGSRTTMLAPGADITTDLPLYRVWKDGELADETADVSSLWRDDLVAFHIGCSFTFEHPVAAAGVPLRHVEQGSNVPMYVTDRECRPAGRVSGPMVVSMRPVPEHQVSLAAAISARMPAVHGGPVHIGDPTELGIADLGAPDFGDPVNLEPGDVPMFWACGVTPQAAVMASRLPFAITHAPGYMLITDTPDSEYVLEVPDAR</sequence>
<evidence type="ECO:0000255" key="1">
    <source>
        <dbReference type="HAMAP-Rule" id="MF_01830"/>
    </source>
</evidence>
<keyword id="KW-0456">Lyase</keyword>
<comment type="similarity">
    <text evidence="1">Belongs to the D-glutamate cyclase family.</text>
</comment>
<reference key="1">
    <citation type="submission" date="2009-03" db="EMBL/GenBank/DDBJ databases">
        <title>Comparison of the complete genome sequences of Rhodococcus erythropolis PR4 and Rhodococcus opacus B4.</title>
        <authorList>
            <person name="Takarada H."/>
            <person name="Sekine M."/>
            <person name="Hosoyama A."/>
            <person name="Yamada R."/>
            <person name="Fujisawa T."/>
            <person name="Omata S."/>
            <person name="Shimizu A."/>
            <person name="Tsukatani N."/>
            <person name="Tanikawa S."/>
            <person name="Fujita N."/>
            <person name="Harayama S."/>
        </authorList>
    </citation>
    <scope>NUCLEOTIDE SEQUENCE [LARGE SCALE GENOMIC DNA]</scope>
    <source>
        <strain>B4</strain>
    </source>
</reference>
<protein>
    <recommendedName>
        <fullName evidence="1">Putative hydro-lyase ROP_32680</fullName>
        <ecNumber evidence="1">4.2.1.-</ecNumber>
    </recommendedName>
</protein>